<sequence length="464" mass="51610">MSTDKTNQSWGGRFSEPVDAFVARFTASVDFDKRLYRHDIMGSIAHATMLAQVGVLSDAERDTIIDGLKTIQGEIEAGNFDWRVDLEDVHMNIEARLTDRIGITGKKLHTGRSRNDQVATDIRLWLRDEIDLILAEITRLQQGLLEQAEREAETIMPGFTHLQTAQPVTFGHHLLAWFEMLSRDYERLVDCRKRANRMPLGSAALAGTTYPIDRELTCKLLGFEAVAGNSLDGVSDRDFAIEFCAAASVAMMHLSRFSEELVLWTSAQFQFIDLPDRFCTGSSIMPQKKNPDVPELVRGKTGRVFGALTGLLTLMKGQPLAYNKDNQEDKEPLFDAADTLRDSLRAFADMIPAIKPKHAIMREAALRGFSTATDLADYLVRRGLPFRDCHEIVGHAVKYGVDTGKDLAEMSLDELRQFSDQIEQDVFAVLTLEGSVNARNHIGGTAPAQVRAAVVRGKALLASR</sequence>
<keyword id="KW-0028">Amino-acid biosynthesis</keyword>
<keyword id="KW-0055">Arginine biosynthesis</keyword>
<keyword id="KW-0963">Cytoplasm</keyword>
<keyword id="KW-0456">Lyase</keyword>
<organism>
    <name type="scientific">Pseudomonas putida (strain GB-1)</name>
    <dbReference type="NCBI Taxonomy" id="76869"/>
    <lineage>
        <taxon>Bacteria</taxon>
        <taxon>Pseudomonadati</taxon>
        <taxon>Pseudomonadota</taxon>
        <taxon>Gammaproteobacteria</taxon>
        <taxon>Pseudomonadales</taxon>
        <taxon>Pseudomonadaceae</taxon>
        <taxon>Pseudomonas</taxon>
    </lineage>
</organism>
<dbReference type="EC" id="4.3.2.1" evidence="1"/>
<dbReference type="EMBL" id="CP000926">
    <property type="protein sequence ID" value="ABY96122.1"/>
    <property type="molecule type" value="Genomic_DNA"/>
</dbReference>
<dbReference type="RefSeq" id="WP_012269992.1">
    <property type="nucleotide sequence ID" value="NC_010322.1"/>
</dbReference>
<dbReference type="SMR" id="B0KH03"/>
<dbReference type="KEGG" id="ppg:PputGB1_0209"/>
<dbReference type="eggNOG" id="COG0165">
    <property type="taxonomic scope" value="Bacteria"/>
</dbReference>
<dbReference type="HOGENOM" id="CLU_027272_2_3_6"/>
<dbReference type="UniPathway" id="UPA00068">
    <property type="reaction ID" value="UER00114"/>
</dbReference>
<dbReference type="Proteomes" id="UP000002157">
    <property type="component" value="Chromosome"/>
</dbReference>
<dbReference type="GO" id="GO:0005829">
    <property type="term" value="C:cytosol"/>
    <property type="evidence" value="ECO:0007669"/>
    <property type="project" value="TreeGrafter"/>
</dbReference>
<dbReference type="GO" id="GO:0004056">
    <property type="term" value="F:argininosuccinate lyase activity"/>
    <property type="evidence" value="ECO:0007669"/>
    <property type="project" value="UniProtKB-UniRule"/>
</dbReference>
<dbReference type="GO" id="GO:0042450">
    <property type="term" value="P:arginine biosynthetic process via ornithine"/>
    <property type="evidence" value="ECO:0007669"/>
    <property type="project" value="InterPro"/>
</dbReference>
<dbReference type="GO" id="GO:0006526">
    <property type="term" value="P:L-arginine biosynthetic process"/>
    <property type="evidence" value="ECO:0007669"/>
    <property type="project" value="UniProtKB-UniRule"/>
</dbReference>
<dbReference type="CDD" id="cd01359">
    <property type="entry name" value="Argininosuccinate_lyase"/>
    <property type="match status" value="1"/>
</dbReference>
<dbReference type="FunFam" id="1.10.275.10:FF:000002">
    <property type="entry name" value="Argininosuccinate lyase"/>
    <property type="match status" value="1"/>
</dbReference>
<dbReference type="FunFam" id="1.10.40.30:FF:000001">
    <property type="entry name" value="Argininosuccinate lyase"/>
    <property type="match status" value="1"/>
</dbReference>
<dbReference type="FunFam" id="1.20.200.10:FF:000015">
    <property type="entry name" value="argininosuccinate lyase isoform X2"/>
    <property type="match status" value="1"/>
</dbReference>
<dbReference type="Gene3D" id="1.10.40.30">
    <property type="entry name" value="Fumarase/aspartase (C-terminal domain)"/>
    <property type="match status" value="1"/>
</dbReference>
<dbReference type="Gene3D" id="1.20.200.10">
    <property type="entry name" value="Fumarase/aspartase (Central domain)"/>
    <property type="match status" value="1"/>
</dbReference>
<dbReference type="Gene3D" id="1.10.275.10">
    <property type="entry name" value="Fumarase/aspartase (N-terminal domain)"/>
    <property type="match status" value="1"/>
</dbReference>
<dbReference type="HAMAP" id="MF_00006">
    <property type="entry name" value="Arg_succ_lyase"/>
    <property type="match status" value="1"/>
</dbReference>
<dbReference type="InterPro" id="IPR029419">
    <property type="entry name" value="Arg_succ_lyase_C"/>
</dbReference>
<dbReference type="InterPro" id="IPR009049">
    <property type="entry name" value="Argininosuccinate_lyase"/>
</dbReference>
<dbReference type="InterPro" id="IPR024083">
    <property type="entry name" value="Fumarase/histidase_N"/>
</dbReference>
<dbReference type="InterPro" id="IPR020557">
    <property type="entry name" value="Fumarate_lyase_CS"/>
</dbReference>
<dbReference type="InterPro" id="IPR000362">
    <property type="entry name" value="Fumarate_lyase_fam"/>
</dbReference>
<dbReference type="InterPro" id="IPR022761">
    <property type="entry name" value="Fumarate_lyase_N"/>
</dbReference>
<dbReference type="InterPro" id="IPR008948">
    <property type="entry name" value="L-Aspartase-like"/>
</dbReference>
<dbReference type="NCBIfam" id="TIGR00838">
    <property type="entry name" value="argH"/>
    <property type="match status" value="1"/>
</dbReference>
<dbReference type="PANTHER" id="PTHR43814">
    <property type="entry name" value="ARGININOSUCCINATE LYASE"/>
    <property type="match status" value="1"/>
</dbReference>
<dbReference type="PANTHER" id="PTHR43814:SF1">
    <property type="entry name" value="ARGININOSUCCINATE LYASE"/>
    <property type="match status" value="1"/>
</dbReference>
<dbReference type="Pfam" id="PF14698">
    <property type="entry name" value="ASL_C2"/>
    <property type="match status" value="1"/>
</dbReference>
<dbReference type="Pfam" id="PF00206">
    <property type="entry name" value="Lyase_1"/>
    <property type="match status" value="1"/>
</dbReference>
<dbReference type="PRINTS" id="PR00145">
    <property type="entry name" value="ARGSUCLYASE"/>
</dbReference>
<dbReference type="PRINTS" id="PR00149">
    <property type="entry name" value="FUMRATELYASE"/>
</dbReference>
<dbReference type="SUPFAM" id="SSF48557">
    <property type="entry name" value="L-aspartase-like"/>
    <property type="match status" value="1"/>
</dbReference>
<dbReference type="PROSITE" id="PS00163">
    <property type="entry name" value="FUMARATE_LYASES"/>
    <property type="match status" value="1"/>
</dbReference>
<gene>
    <name evidence="1" type="primary">argH</name>
    <name type="ordered locus">PputGB1_0209</name>
</gene>
<comment type="catalytic activity">
    <reaction evidence="1">
        <text>2-(N(omega)-L-arginino)succinate = fumarate + L-arginine</text>
        <dbReference type="Rhea" id="RHEA:24020"/>
        <dbReference type="ChEBI" id="CHEBI:29806"/>
        <dbReference type="ChEBI" id="CHEBI:32682"/>
        <dbReference type="ChEBI" id="CHEBI:57472"/>
        <dbReference type="EC" id="4.3.2.1"/>
    </reaction>
</comment>
<comment type="pathway">
    <text evidence="1">Amino-acid biosynthesis; L-arginine biosynthesis; L-arginine from L-ornithine and carbamoyl phosphate: step 3/3.</text>
</comment>
<comment type="subcellular location">
    <subcellularLocation>
        <location evidence="1">Cytoplasm</location>
    </subcellularLocation>
</comment>
<comment type="similarity">
    <text evidence="1">Belongs to the lyase 1 family. Argininosuccinate lyase subfamily.</text>
</comment>
<name>ARLY_PSEPG</name>
<evidence type="ECO:0000255" key="1">
    <source>
        <dbReference type="HAMAP-Rule" id="MF_00006"/>
    </source>
</evidence>
<feature type="chain" id="PRO_1000073853" description="Argininosuccinate lyase">
    <location>
        <begin position="1"/>
        <end position="464"/>
    </location>
</feature>
<accession>B0KH03</accession>
<protein>
    <recommendedName>
        <fullName evidence="1">Argininosuccinate lyase</fullName>
        <shortName evidence="1">ASAL</shortName>
        <ecNumber evidence="1">4.3.2.1</ecNumber>
    </recommendedName>
    <alternativeName>
        <fullName evidence="1">Arginosuccinase</fullName>
    </alternativeName>
</protein>
<reference key="1">
    <citation type="submission" date="2008-01" db="EMBL/GenBank/DDBJ databases">
        <title>Complete sequence of Pseudomonas putida GB-1.</title>
        <authorList>
            <consortium name="US DOE Joint Genome Institute"/>
            <person name="Copeland A."/>
            <person name="Lucas S."/>
            <person name="Lapidus A."/>
            <person name="Barry K."/>
            <person name="Glavina del Rio T."/>
            <person name="Dalin E."/>
            <person name="Tice H."/>
            <person name="Pitluck S."/>
            <person name="Bruce D."/>
            <person name="Goodwin L."/>
            <person name="Chertkov O."/>
            <person name="Brettin T."/>
            <person name="Detter J.C."/>
            <person name="Han C."/>
            <person name="Kuske C.R."/>
            <person name="Schmutz J."/>
            <person name="Larimer F."/>
            <person name="Land M."/>
            <person name="Hauser L."/>
            <person name="Kyrpides N."/>
            <person name="Kim E."/>
            <person name="McCarthy J.K."/>
            <person name="Richardson P."/>
        </authorList>
    </citation>
    <scope>NUCLEOTIDE SEQUENCE [LARGE SCALE GENOMIC DNA]</scope>
    <source>
        <strain>GB-1</strain>
    </source>
</reference>
<proteinExistence type="inferred from homology"/>